<sequence>MGYHSVFIAVFLWSSMVCHNGLAMMDDGKLTSSSGPPNYDYADALAKAILFFEGQRSGKLPSSQRVKWREDSALSDGKLQNVNLMGGYYDAGDNVKFGWPMAFSTSLLSWAAVEYESEISSVNQLGYLQSAIRWGADFMLRAHTSPTTLYTQVGDGNADHNCWERPEDMDTPRTVYKIDANSPGTEVAAEYAAALSAASIVFKKIDAKYSSTLLSHSKSLFDFADKNRGSYSGSCPFYCSYSGYQDELLWAAAWLYKASGESKYLSYIISNQGWSQTVSEFSWDNKFVGAQTLLTEEFYGGKKDLAKIKTDAESFICAVMPGSNSRQIKTTPGGLLFTRDSSNLQYTTSSTMVLFIFSRILNRNHINGINCGSSHFTASQIRGFAKTQVEYILGKNPMKMSYMVGFGSKYPKQLHHRGSSIPSIKVHPAKVGCNAGLSDYYNSANPNPNTHVGAIVGGPDSNDRFNDARSDYSHAEPTTYINAAFVASISALLAKT</sequence>
<keyword id="KW-0119">Carbohydrate metabolism</keyword>
<keyword id="KW-0136">Cellulose degradation</keyword>
<keyword id="KW-0292">Fruit ripening</keyword>
<keyword id="KW-0326">Glycosidase</keyword>
<keyword id="KW-0378">Hydrolase</keyword>
<keyword id="KW-0624">Polysaccharide degradation</keyword>
<keyword id="KW-0732">Signal</keyword>
<reference key="1">
    <citation type="journal article" date="1991" name="Plant Physiol.">
        <title>Sequence analysis and comparison of avocado fruit and bean abscission cellulases.</title>
        <authorList>
            <person name="Tucker M.L."/>
            <person name="Milligan S.B."/>
        </authorList>
    </citation>
    <scope>NUCLEOTIDE SEQUENCE [MRNA]</scope>
    <source>
        <strain>cv. Red Kidney</strain>
    </source>
</reference>
<reference key="2">
    <citation type="submission" date="1993-08" db="EMBL/GenBank/DDBJ databases">
        <authorList>
            <person name="Tucker M.L."/>
        </authorList>
    </citation>
    <scope>SEQUENCE REVISION</scope>
    <source>
        <strain>cv. Red Kidney</strain>
    </source>
</reference>
<reference key="3">
    <citation type="journal article" date="1988" name="Plant Physiol.">
        <title>Bean abscission cellulase: characterization of a cDNA clone and regulation of gene expression by ethylene and auxin.</title>
        <authorList>
            <person name="Tucker M.L."/>
            <person name="Sexton R."/>
            <person name="del Campillo E."/>
            <person name="Lewis L.N."/>
        </authorList>
    </citation>
    <scope>NUCLEOTIDE SEQUENCE [MRNA] OF 359-496</scope>
    <source>
        <strain>cv. Red Kidney</strain>
    </source>
</reference>
<feature type="signal peptide" evidence="1">
    <location>
        <begin position="1"/>
        <end position="23"/>
    </location>
</feature>
<feature type="chain" id="PRO_0000007956" description="Endoglucanase">
    <location>
        <begin position="24"/>
        <end position="496"/>
    </location>
</feature>
<feature type="active site" description="Nucleophile" evidence="4">
    <location>
        <position position="93"/>
    </location>
</feature>
<feature type="active site" evidence="2">
    <location>
        <position position="415"/>
    </location>
</feature>
<feature type="active site" evidence="3">
    <location>
        <position position="467"/>
    </location>
</feature>
<feature type="active site" evidence="3">
    <location>
        <position position="476"/>
    </location>
</feature>
<feature type="sequence conflict" description="In Ref. 3." evidence="5" ref="3">
    <original>DSNDRFN</original>
    <variation>IQMTFH</variation>
    <location>
        <begin position="460"/>
        <end position="466"/>
    </location>
</feature>
<dbReference type="EC" id="3.2.1.4"/>
<dbReference type="EMBL" id="M57400">
    <property type="protein sequence ID" value="AAA02563.1"/>
    <property type="molecule type" value="mRNA"/>
</dbReference>
<dbReference type="PIR" id="T11783">
    <property type="entry name" value="T11783"/>
</dbReference>
<dbReference type="RefSeq" id="XP_007158534.1">
    <property type="nucleotide sequence ID" value="XM_007158472.1"/>
</dbReference>
<dbReference type="RefSeq" id="XP_068469301.1">
    <property type="nucleotide sequence ID" value="XM_068613200.1"/>
</dbReference>
<dbReference type="SMR" id="P22503"/>
<dbReference type="CAZy" id="GH9">
    <property type="family name" value="Glycoside Hydrolase Family 9"/>
</dbReference>
<dbReference type="EnsemblPlants" id="ESW30528">
    <property type="protein sequence ID" value="ESW30528"/>
    <property type="gene ID" value="PHAVU_002G160200g"/>
</dbReference>
<dbReference type="GeneID" id="137811441"/>
<dbReference type="Gramene" id="ESW30528">
    <property type="protein sequence ID" value="ESW30528"/>
    <property type="gene ID" value="PHAVU_002G160200g"/>
</dbReference>
<dbReference type="eggNOG" id="ENOG502QRF6">
    <property type="taxonomic scope" value="Eukaryota"/>
</dbReference>
<dbReference type="OMA" id="NNQGWSQ"/>
<dbReference type="OrthoDB" id="10257085at2759"/>
<dbReference type="GO" id="GO:0008810">
    <property type="term" value="F:cellulase activity"/>
    <property type="evidence" value="ECO:0007669"/>
    <property type="project" value="UniProtKB-EC"/>
</dbReference>
<dbReference type="GO" id="GO:0030245">
    <property type="term" value="P:cellulose catabolic process"/>
    <property type="evidence" value="ECO:0007669"/>
    <property type="project" value="UniProtKB-KW"/>
</dbReference>
<dbReference type="GO" id="GO:0009835">
    <property type="term" value="P:fruit ripening"/>
    <property type="evidence" value="ECO:0007669"/>
    <property type="project" value="UniProtKB-KW"/>
</dbReference>
<dbReference type="FunFam" id="1.50.10.10:FF:000020">
    <property type="entry name" value="Endoglucanase"/>
    <property type="match status" value="1"/>
</dbReference>
<dbReference type="Gene3D" id="1.50.10.10">
    <property type="match status" value="1"/>
</dbReference>
<dbReference type="InterPro" id="IPR008928">
    <property type="entry name" value="6-hairpin_glycosidase_sf"/>
</dbReference>
<dbReference type="InterPro" id="IPR012341">
    <property type="entry name" value="6hp_glycosidase-like_sf"/>
</dbReference>
<dbReference type="InterPro" id="IPR001701">
    <property type="entry name" value="Glyco_hydro_9"/>
</dbReference>
<dbReference type="InterPro" id="IPR033126">
    <property type="entry name" value="Glyco_hydro_9_Asp/Glu_AS"/>
</dbReference>
<dbReference type="InterPro" id="IPR018221">
    <property type="entry name" value="Glyco_hydro_9_His_AS"/>
</dbReference>
<dbReference type="PANTHER" id="PTHR22298">
    <property type="entry name" value="ENDO-1,4-BETA-GLUCANASE"/>
    <property type="match status" value="1"/>
</dbReference>
<dbReference type="Pfam" id="PF00759">
    <property type="entry name" value="Glyco_hydro_9"/>
    <property type="match status" value="1"/>
</dbReference>
<dbReference type="SUPFAM" id="SSF48208">
    <property type="entry name" value="Six-hairpin glycosidases"/>
    <property type="match status" value="1"/>
</dbReference>
<dbReference type="PROSITE" id="PS60032">
    <property type="entry name" value="GH9_1"/>
    <property type="match status" value="1"/>
</dbReference>
<dbReference type="PROSITE" id="PS00592">
    <property type="entry name" value="GH9_2"/>
    <property type="match status" value="1"/>
</dbReference>
<dbReference type="PROSITE" id="PS00698">
    <property type="entry name" value="GH9_3"/>
    <property type="match status" value="1"/>
</dbReference>
<name>GUN_PHAVU</name>
<proteinExistence type="evidence at transcript level"/>
<evidence type="ECO:0000255" key="1"/>
<evidence type="ECO:0000255" key="2">
    <source>
        <dbReference type="PROSITE-ProRule" id="PRU10059"/>
    </source>
</evidence>
<evidence type="ECO:0000255" key="3">
    <source>
        <dbReference type="PROSITE-ProRule" id="PRU10060"/>
    </source>
</evidence>
<evidence type="ECO:0000255" key="4">
    <source>
        <dbReference type="PROSITE-ProRule" id="PRU10140"/>
    </source>
</evidence>
<evidence type="ECO:0000305" key="5"/>
<organism>
    <name type="scientific">Phaseolus vulgaris</name>
    <name type="common">Kidney bean</name>
    <name type="synonym">French bean</name>
    <dbReference type="NCBI Taxonomy" id="3885"/>
    <lineage>
        <taxon>Eukaryota</taxon>
        <taxon>Viridiplantae</taxon>
        <taxon>Streptophyta</taxon>
        <taxon>Embryophyta</taxon>
        <taxon>Tracheophyta</taxon>
        <taxon>Spermatophyta</taxon>
        <taxon>Magnoliopsida</taxon>
        <taxon>eudicotyledons</taxon>
        <taxon>Gunneridae</taxon>
        <taxon>Pentapetalae</taxon>
        <taxon>rosids</taxon>
        <taxon>fabids</taxon>
        <taxon>Fabales</taxon>
        <taxon>Fabaceae</taxon>
        <taxon>Papilionoideae</taxon>
        <taxon>50 kb inversion clade</taxon>
        <taxon>NPAAA clade</taxon>
        <taxon>indigoferoid/millettioid clade</taxon>
        <taxon>Phaseoleae</taxon>
        <taxon>Phaseolus</taxon>
    </lineage>
</organism>
<accession>P22503</accession>
<comment type="function">
    <text>Involved in ripening fruit process.</text>
</comment>
<comment type="catalytic activity">
    <reaction>
        <text>Endohydrolysis of (1-&gt;4)-beta-D-glucosidic linkages in cellulose, lichenin and cereal beta-D-glucans.</text>
        <dbReference type="EC" id="3.2.1.4"/>
    </reaction>
</comment>
<comment type="developmental stage">
    <text>In ripening fruit.</text>
</comment>
<comment type="similarity">
    <text evidence="4 5">Belongs to the glycosyl hydrolase 9 (cellulase E) family.</text>
</comment>
<protein>
    <recommendedName>
        <fullName>Endoglucanase</fullName>
        <ecNumber>3.2.1.4</ecNumber>
    </recommendedName>
    <alternativeName>
        <fullName>Abscission cellulase</fullName>
    </alternativeName>
    <alternativeName>
        <fullName>Endo-1,4-beta-glucanase</fullName>
    </alternativeName>
</protein>